<name>LACB_STAAS</name>
<reference key="1">
    <citation type="journal article" date="2004" name="Proc. Natl. Acad. Sci. U.S.A.">
        <title>Complete genomes of two clinical Staphylococcus aureus strains: evidence for the rapid evolution of virulence and drug resistance.</title>
        <authorList>
            <person name="Holden M.T.G."/>
            <person name="Feil E.J."/>
            <person name="Lindsay J.A."/>
            <person name="Peacock S.J."/>
            <person name="Day N.P.J."/>
            <person name="Enright M.C."/>
            <person name="Foster T.J."/>
            <person name="Moore C.E."/>
            <person name="Hurst L."/>
            <person name="Atkin R."/>
            <person name="Barron A."/>
            <person name="Bason N."/>
            <person name="Bentley S.D."/>
            <person name="Chillingworth C."/>
            <person name="Chillingworth T."/>
            <person name="Churcher C."/>
            <person name="Clark L."/>
            <person name="Corton C."/>
            <person name="Cronin A."/>
            <person name="Doggett J."/>
            <person name="Dowd L."/>
            <person name="Feltwell T."/>
            <person name="Hance Z."/>
            <person name="Harris B."/>
            <person name="Hauser H."/>
            <person name="Holroyd S."/>
            <person name="Jagels K."/>
            <person name="James K.D."/>
            <person name="Lennard N."/>
            <person name="Line A."/>
            <person name="Mayes R."/>
            <person name="Moule S."/>
            <person name="Mungall K."/>
            <person name="Ormond D."/>
            <person name="Quail M.A."/>
            <person name="Rabbinowitsch E."/>
            <person name="Rutherford K.M."/>
            <person name="Sanders M."/>
            <person name="Sharp S."/>
            <person name="Simmonds M."/>
            <person name="Stevens K."/>
            <person name="Whitehead S."/>
            <person name="Barrell B.G."/>
            <person name="Spratt B.G."/>
            <person name="Parkhill J."/>
        </authorList>
    </citation>
    <scope>NUCLEOTIDE SEQUENCE [LARGE SCALE GENOMIC DNA]</scope>
    <source>
        <strain>MSSA476</strain>
    </source>
</reference>
<dbReference type="EC" id="5.3.1.26" evidence="1"/>
<dbReference type="EMBL" id="BX571857">
    <property type="protein sequence ID" value="CAG43903.1"/>
    <property type="molecule type" value="Genomic_DNA"/>
</dbReference>
<dbReference type="RefSeq" id="WP_000684746.1">
    <property type="nucleotide sequence ID" value="NC_002953.3"/>
</dbReference>
<dbReference type="SMR" id="Q6G7C0"/>
<dbReference type="KEGG" id="sas:SAS2095"/>
<dbReference type="HOGENOM" id="CLU_091396_2_0_9"/>
<dbReference type="UniPathway" id="UPA00702">
    <property type="reaction ID" value="UER00714"/>
</dbReference>
<dbReference type="GO" id="GO:0050044">
    <property type="term" value="F:galactose-6-phosphate isomerase activity"/>
    <property type="evidence" value="ECO:0007669"/>
    <property type="project" value="UniProtKB-UniRule"/>
</dbReference>
<dbReference type="GO" id="GO:0004751">
    <property type="term" value="F:ribose-5-phosphate isomerase activity"/>
    <property type="evidence" value="ECO:0007669"/>
    <property type="project" value="TreeGrafter"/>
</dbReference>
<dbReference type="GO" id="GO:0019316">
    <property type="term" value="P:D-allose catabolic process"/>
    <property type="evidence" value="ECO:0007669"/>
    <property type="project" value="TreeGrafter"/>
</dbReference>
<dbReference type="GO" id="GO:0019388">
    <property type="term" value="P:galactose catabolic process"/>
    <property type="evidence" value="ECO:0007669"/>
    <property type="project" value="UniProtKB-UniPathway"/>
</dbReference>
<dbReference type="GO" id="GO:0019512">
    <property type="term" value="P:lactose catabolic process via tagatose-6-phosphate"/>
    <property type="evidence" value="ECO:0007669"/>
    <property type="project" value="UniProtKB-UniRule"/>
</dbReference>
<dbReference type="GO" id="GO:0009052">
    <property type="term" value="P:pentose-phosphate shunt, non-oxidative branch"/>
    <property type="evidence" value="ECO:0007669"/>
    <property type="project" value="TreeGrafter"/>
</dbReference>
<dbReference type="Gene3D" id="3.40.1400.10">
    <property type="entry name" value="Sugar-phosphate isomerase, RpiB/LacA/LacB"/>
    <property type="match status" value="1"/>
</dbReference>
<dbReference type="HAMAP" id="MF_01556">
    <property type="entry name" value="LacB"/>
    <property type="match status" value="1"/>
</dbReference>
<dbReference type="InterPro" id="IPR004784">
    <property type="entry name" value="LacB"/>
</dbReference>
<dbReference type="InterPro" id="IPR003500">
    <property type="entry name" value="RpiB_LacA_LacB"/>
</dbReference>
<dbReference type="InterPro" id="IPR036569">
    <property type="entry name" value="RpiB_LacA_LacB_sf"/>
</dbReference>
<dbReference type="NCBIfam" id="TIGR01119">
    <property type="entry name" value="lacB"/>
    <property type="match status" value="1"/>
</dbReference>
<dbReference type="NCBIfam" id="NF004051">
    <property type="entry name" value="PRK05571.1"/>
    <property type="match status" value="1"/>
</dbReference>
<dbReference type="NCBIfam" id="NF006381">
    <property type="entry name" value="PRK08622.1"/>
    <property type="match status" value="1"/>
</dbReference>
<dbReference type="NCBIfam" id="NF009258">
    <property type="entry name" value="PRK12615.1"/>
    <property type="match status" value="1"/>
</dbReference>
<dbReference type="NCBIfam" id="TIGR00689">
    <property type="entry name" value="rpiB_lacA_lacB"/>
    <property type="match status" value="1"/>
</dbReference>
<dbReference type="PANTHER" id="PTHR30345:SF0">
    <property type="entry name" value="DNA DAMAGE-REPAIR_TOLERATION PROTEIN DRT102"/>
    <property type="match status" value="1"/>
</dbReference>
<dbReference type="PANTHER" id="PTHR30345">
    <property type="entry name" value="RIBOSE-5-PHOSPHATE ISOMERASE B"/>
    <property type="match status" value="1"/>
</dbReference>
<dbReference type="Pfam" id="PF02502">
    <property type="entry name" value="LacAB_rpiB"/>
    <property type="match status" value="1"/>
</dbReference>
<dbReference type="PIRSF" id="PIRSF005384">
    <property type="entry name" value="RpiB_LacA_B"/>
    <property type="match status" value="1"/>
</dbReference>
<dbReference type="SUPFAM" id="SSF89623">
    <property type="entry name" value="Ribose/Galactose isomerase RpiB/AlsB"/>
    <property type="match status" value="1"/>
</dbReference>
<sequence length="171" mass="18951">MKIALGCDHIVTDTKMRVSEFLKSKGHEVIDVGTYDFTRTHYPIFGKKVGEQVVSGNADLGVCICGTGVGINNAVNKVPGVRSALVRDMTSALYAKEELNANVIGFGGRIIGELLMCDIIDAFINAEYKPTEENKKLIAKIKHLETSNADQADPHFFDEFLEKWDRGEYHD</sequence>
<evidence type="ECO:0000255" key="1">
    <source>
        <dbReference type="HAMAP-Rule" id="MF_01556"/>
    </source>
</evidence>
<gene>
    <name evidence="1" type="primary">lacB</name>
    <name type="ordered locus">SAS2095</name>
</gene>
<accession>Q6G7C0</accession>
<feature type="chain" id="PRO_0000208139" description="Galactose-6-phosphate isomerase subunit LacB">
    <location>
        <begin position="1"/>
        <end position="171"/>
    </location>
</feature>
<keyword id="KW-0413">Isomerase</keyword>
<keyword id="KW-0423">Lactose metabolism</keyword>
<protein>
    <recommendedName>
        <fullName evidence="1">Galactose-6-phosphate isomerase subunit LacB</fullName>
        <ecNumber evidence="1">5.3.1.26</ecNumber>
    </recommendedName>
</protein>
<proteinExistence type="inferred from homology"/>
<comment type="catalytic activity">
    <reaction evidence="1">
        <text>aldehydo-D-galactose 6-phosphate = keto-D-tagatose 6-phosphate</text>
        <dbReference type="Rhea" id="RHEA:13033"/>
        <dbReference type="ChEBI" id="CHEBI:58255"/>
        <dbReference type="ChEBI" id="CHEBI:134283"/>
        <dbReference type="EC" id="5.3.1.26"/>
    </reaction>
</comment>
<comment type="pathway">
    <text evidence="1">Carbohydrate metabolism; D-galactose 6-phosphate degradation; D-tagatose 6-phosphate from D-galactose 6-phosphate: step 1/1.</text>
</comment>
<comment type="subunit">
    <text evidence="1">Heteromultimeric protein consisting of LacA and LacB.</text>
</comment>
<comment type="similarity">
    <text evidence="1">Belongs to the LacAB/RpiB family.</text>
</comment>
<organism>
    <name type="scientific">Staphylococcus aureus (strain MSSA476)</name>
    <dbReference type="NCBI Taxonomy" id="282459"/>
    <lineage>
        <taxon>Bacteria</taxon>
        <taxon>Bacillati</taxon>
        <taxon>Bacillota</taxon>
        <taxon>Bacilli</taxon>
        <taxon>Bacillales</taxon>
        <taxon>Staphylococcaceae</taxon>
        <taxon>Staphylococcus</taxon>
    </lineage>
</organism>